<comment type="function">
    <text evidence="1">Transcriptional repressor; DNA-binding protein that specifically recognizes the core sequence 5'-YAAC[GT]G-3'. Dimerization with PFN1 reduces its DNA-binding capacity (By similarity).</text>
</comment>
<comment type="subunit">
    <text evidence="1">Interacts with PFN1. Homodimer and heterodimer with PFN1 (By similarity).</text>
</comment>
<comment type="interaction">
    <interactant intactId="EBI-2858213">
        <id>Q86VE0</id>
    </interactant>
    <interactant intactId="EBI-357530">
        <id>Q9ULX6</id>
        <label>AKAP8L</label>
    </interactant>
    <organismsDiffer>false</organismsDiffer>
    <experiments>3</experiments>
</comment>
<comment type="interaction">
    <interactant intactId="EBI-2858213">
        <id>Q86VE0</id>
    </interactant>
    <interactant intactId="EBI-2949658">
        <id>O95429</id>
        <label>BAG4</label>
    </interactant>
    <organismsDiffer>false</organismsDiffer>
    <experiments>3</experiments>
</comment>
<comment type="interaction">
    <interactant intactId="EBI-2858213">
        <id>Q86VE0</id>
    </interactant>
    <interactant intactId="EBI-17289784">
        <id>Q96PG8</id>
        <label>BBC3</label>
    </interactant>
    <organismsDiffer>false</organismsDiffer>
    <experiments>3</experiments>
</comment>
<comment type="interaction">
    <interactant intactId="EBI-2858213">
        <id>Q86VE0</id>
    </interactant>
    <interactant intactId="EBI-3866279">
        <id>Q9BWT7</id>
        <label>CARD10</label>
    </interactant>
    <organismsDiffer>false</organismsDiffer>
    <experiments>3</experiments>
</comment>
<comment type="interaction">
    <interactant intactId="EBI-2858213">
        <id>Q86VE0</id>
    </interactant>
    <interactant intactId="EBI-741528">
        <id>Q9UKJ5</id>
        <label>CHIC2</label>
    </interactant>
    <organismsDiffer>false</organismsDiffer>
    <experiments>3</experiments>
</comment>
<comment type="interaction">
    <interactant intactId="EBI-2858213">
        <id>Q86VE0</id>
    </interactant>
    <interactant intactId="EBI-12868028">
        <id>A0PJX0</id>
        <label>CIB4</label>
    </interactant>
    <organismsDiffer>false</organismsDiffer>
    <experiments>3</experiments>
</comment>
<comment type="interaction">
    <interactant intactId="EBI-2858213">
        <id>Q86VE0</id>
    </interactant>
    <interactant intactId="EBI-3867333">
        <id>A8MQ03</id>
        <label>CYSRT1</label>
    </interactant>
    <organismsDiffer>false</organismsDiffer>
    <experiments>3</experiments>
</comment>
<comment type="interaction">
    <interactant intactId="EBI-2858213">
        <id>Q86VE0</id>
    </interactant>
    <interactant intactId="EBI-741101">
        <id>Q13643</id>
        <label>FHL3</label>
    </interactant>
    <organismsDiffer>false</organismsDiffer>
    <experiments>3</experiments>
</comment>
<comment type="interaction">
    <interactant intactId="EBI-2858213">
        <id>Q86VE0</id>
    </interactant>
    <interactant intactId="EBI-351590">
        <id>P31943</id>
        <label>HNRNPH1</label>
    </interactant>
    <organismsDiffer>false</organismsDiffer>
    <experiments>3</experiments>
</comment>
<comment type="interaction">
    <interactant intactId="EBI-2858213">
        <id>Q86VE0</id>
    </interactant>
    <interactant intactId="EBI-7060731">
        <id>P61978-2</id>
        <label>HNRNPK</label>
    </interactant>
    <organismsDiffer>false</organismsDiffer>
    <experiments>3</experiments>
</comment>
<comment type="interaction">
    <interactant intactId="EBI-2858213">
        <id>Q86VE0</id>
    </interactant>
    <interactant intactId="EBI-740785">
        <id>P49639</id>
        <label>HOXA1</label>
    </interactant>
    <organismsDiffer>false</organismsDiffer>
    <experiments>3</experiments>
</comment>
<comment type="interaction">
    <interactant intactId="EBI-2858213">
        <id>Q86VE0</id>
    </interactant>
    <interactant intactId="EBI-722504">
        <id>O75525</id>
        <label>KHDRBS3</label>
    </interactant>
    <organismsDiffer>false</organismsDiffer>
    <experiments>3</experiments>
</comment>
<comment type="interaction">
    <interactant intactId="EBI-2858213">
        <id>Q86VE0</id>
    </interactant>
    <interactant intactId="EBI-954040">
        <id>Q92845</id>
        <label>KIFAP3</label>
    </interactant>
    <organismsDiffer>false</organismsDiffer>
    <experiments>3</experiments>
</comment>
<comment type="interaction">
    <interactant intactId="EBI-2858213">
        <id>Q86VE0</id>
    </interactant>
    <interactant intactId="EBI-10171697">
        <id>Q6A162</id>
        <label>KRT40</label>
    </interactant>
    <organismsDiffer>false</organismsDiffer>
    <experiments>3</experiments>
</comment>
<comment type="interaction">
    <interactant intactId="EBI-2858213">
        <id>Q86VE0</id>
    </interactant>
    <interactant intactId="EBI-11749135">
        <id>Q8IUG1</id>
        <label>KRTAP1-3</label>
    </interactant>
    <organismsDiffer>false</organismsDiffer>
    <experiments>3</experiments>
</comment>
<comment type="interaction">
    <interactant intactId="EBI-2858213">
        <id>Q86VE0</id>
    </interactant>
    <interactant intactId="EBI-10172290">
        <id>P60409</id>
        <label>KRTAP10-7</label>
    </interactant>
    <organismsDiffer>false</organismsDiffer>
    <experiments>3</experiments>
</comment>
<comment type="interaction">
    <interactant intactId="EBI-2858213">
        <id>Q86VE0</id>
    </interactant>
    <interactant intactId="EBI-10171774">
        <id>P60410</id>
        <label>KRTAP10-8</label>
    </interactant>
    <organismsDiffer>false</organismsDiffer>
    <experiments>3</experiments>
</comment>
<comment type="interaction">
    <interactant intactId="EBI-2858213">
        <id>Q86VE0</id>
    </interactant>
    <interactant intactId="EBI-10172052">
        <id>P60411</id>
        <label>KRTAP10-9</label>
    </interactant>
    <organismsDiffer>false</organismsDiffer>
    <experiments>3</experiments>
</comment>
<comment type="interaction">
    <interactant intactId="EBI-2858213">
        <id>Q86VE0</id>
    </interactant>
    <interactant intactId="EBI-10176379">
        <id>P59991</id>
        <label>KRTAP12-2</label>
    </interactant>
    <organismsDiffer>false</organismsDiffer>
    <experiments>3</experiments>
</comment>
<comment type="interaction">
    <interactant intactId="EBI-2858213">
        <id>Q86VE0</id>
    </interactant>
    <interactant intactId="EBI-1048945">
        <id>Q3LI72</id>
        <label>KRTAP19-5</label>
    </interactant>
    <organismsDiffer>false</organismsDiffer>
    <experiments>3</experiments>
</comment>
<comment type="interaction">
    <interactant intactId="EBI-2858213">
        <id>Q86VE0</id>
    </interactant>
    <interactant intactId="EBI-12805508">
        <id>Q3LI70</id>
        <label>KRTAP19-6</label>
    </interactant>
    <organismsDiffer>false</organismsDiffer>
    <experiments>3</experiments>
</comment>
<comment type="interaction">
    <interactant intactId="EBI-2858213">
        <id>Q86VE0</id>
    </interactant>
    <interactant intactId="EBI-9996449">
        <id>Q9BYR8</id>
        <label>KRTAP3-1</label>
    </interactant>
    <organismsDiffer>false</organismsDiffer>
    <experiments>3</experiments>
</comment>
<comment type="interaction">
    <interactant intactId="EBI-2858213">
        <id>Q86VE0</id>
    </interactant>
    <interactant intactId="EBI-10250562">
        <id>Q6L8G9</id>
        <label>KRTAP5-6</label>
    </interactant>
    <organismsDiffer>false</organismsDiffer>
    <experiments>3</experiments>
</comment>
<comment type="interaction">
    <interactant intactId="EBI-2858213">
        <id>Q86VE0</id>
    </interactant>
    <interactant intactId="EBI-724076">
        <id>Q99750</id>
        <label>MDFI</label>
    </interactant>
    <organismsDiffer>false</organismsDiffer>
    <experiments>3</experiments>
</comment>
<comment type="interaction">
    <interactant intactId="EBI-2858213">
        <id>Q86VE0</id>
    </interactant>
    <interactant intactId="EBI-11522433">
        <id>Q5JR59-3</id>
        <label>MTUS2</label>
    </interactant>
    <organismsDiffer>false</organismsDiffer>
    <experiments>5</experiments>
</comment>
<comment type="interaction">
    <interactant intactId="EBI-2858213">
        <id>Q86VE0</id>
    </interactant>
    <interactant intactId="EBI-713635">
        <id>O43639</id>
        <label>NCK2</label>
    </interactant>
    <organismsDiffer>false</organismsDiffer>
    <experiments>3</experiments>
</comment>
<comment type="interaction">
    <interactant intactId="EBI-2858213">
        <id>Q86VE0</id>
    </interactant>
    <interactant intactId="EBI-10172876">
        <id>Q7Z6G3-2</id>
        <label>NECAB2</label>
    </interactant>
    <organismsDiffer>false</organismsDiffer>
    <experiments>3</experiments>
</comment>
<comment type="interaction">
    <interactant intactId="EBI-2858213">
        <id>Q86VE0</id>
    </interactant>
    <interactant intactId="EBI-22310682">
        <id>P0DPK4</id>
        <label>NOTCH2NLC</label>
    </interactant>
    <organismsDiffer>false</organismsDiffer>
    <experiments>3</experiments>
</comment>
<comment type="interaction">
    <interactant intactId="EBI-2858213">
        <id>Q86VE0</id>
    </interactant>
    <interactant intactId="EBI-3957793">
        <id>Q9GZV8</id>
        <label>PRDM14</label>
    </interactant>
    <organismsDiffer>false</organismsDiffer>
    <experiments>3</experiments>
</comment>
<comment type="interaction">
    <interactant intactId="EBI-2858213">
        <id>Q86VE0</id>
    </interactant>
    <interactant intactId="EBI-2803328">
        <id>P79522</id>
        <label>PRR3</label>
    </interactant>
    <organismsDiffer>false</organismsDiffer>
    <experiments>3</experiments>
</comment>
<comment type="interaction">
    <interactant intactId="EBI-2858213">
        <id>Q86VE0</id>
    </interactant>
    <interactant intactId="EBI-2949699">
        <id>P98179</id>
        <label>RBM3</label>
    </interactant>
    <organismsDiffer>false</organismsDiffer>
    <experiments>3</experiments>
</comment>
<comment type="interaction">
    <interactant intactId="EBI-2858213">
        <id>Q86VE0</id>
    </interactant>
    <interactant intactId="EBI-743526">
        <id>P38159</id>
        <label>RBMX</label>
    </interactant>
    <organismsDiffer>false</organismsDiffer>
    <experiments>3</experiments>
</comment>
<comment type="interaction">
    <interactant intactId="EBI-2858213">
        <id>Q86VE0</id>
    </interactant>
    <interactant intactId="EBI-11994018">
        <id>P0DJD3-2</id>
        <label>RBMY1A1</label>
    </interactant>
    <organismsDiffer>false</organismsDiffer>
    <experiments>3</experiments>
</comment>
<comment type="interaction">
    <interactant intactId="EBI-2858213">
        <id>Q86VE0</id>
    </interactant>
    <interactant intactId="EBI-11987469">
        <id>Q6ZRY4</id>
        <label>RBPMS2</label>
    </interactant>
    <organismsDiffer>false</organismsDiffer>
    <experiments>3</experiments>
</comment>
<comment type="interaction">
    <interactant intactId="EBI-2858213">
        <id>Q86VE0</id>
    </interactant>
    <interactant intactId="EBI-711613">
        <id>P21673</id>
        <label>SAT1</label>
    </interactant>
    <organismsDiffer>false</organismsDiffer>
    <experiments>3</experiments>
</comment>
<comment type="interaction">
    <interactant intactId="EBI-2858213">
        <id>Q86VE0</id>
    </interactant>
    <interactant intactId="EBI-11123832">
        <id>O60506-4</id>
        <label>SYNCRIP</label>
    </interactant>
    <organismsDiffer>false</organismsDiffer>
    <experiments>3</experiments>
</comment>
<comment type="interaction">
    <interactant intactId="EBI-2858213">
        <id>Q86VE0</id>
    </interactant>
    <interactant intactId="EBI-2562368">
        <id>P22735</id>
        <label>TGM1</label>
    </interactant>
    <organismsDiffer>false</organismsDiffer>
    <experiments>3</experiments>
</comment>
<comment type="interaction">
    <interactant intactId="EBI-2858213">
        <id>Q86VE0</id>
    </interactant>
    <interactant intactId="EBI-949753">
        <id>Q63HR2</id>
        <label>TNS2</label>
    </interactant>
    <organismsDiffer>false</organismsDiffer>
    <experiments>3</experiments>
</comment>
<comment type="interaction">
    <interactant intactId="EBI-2858213">
        <id>Q86VE0</id>
    </interactant>
    <interactant intactId="EBI-725485">
        <id>P62995</id>
        <label>TRA2B</label>
    </interactant>
    <organismsDiffer>false</organismsDiffer>
    <experiments>3</experiments>
</comment>
<comment type="subcellular location">
    <subcellularLocation>
        <location evidence="1">Nucleus</location>
    </subcellularLocation>
</comment>
<comment type="domain">
    <text evidence="1">The proline-rich region is required for PFN1 interaction.</text>
</comment>
<evidence type="ECO:0000250" key="1"/>
<evidence type="ECO:0000255" key="2">
    <source>
        <dbReference type="PROSITE-ProRule" id="PRU00133"/>
    </source>
</evidence>
<evidence type="ECO:0000256" key="3">
    <source>
        <dbReference type="SAM" id="MobiDB-lite"/>
    </source>
</evidence>
<protein>
    <recommendedName>
        <fullName>Myb-related transcription factor, partner of profilin</fullName>
    </recommendedName>
    <alternativeName>
        <fullName>Myb-related protein p42POP</fullName>
    </alternativeName>
    <alternativeName>
        <fullName>Partner of profilin</fullName>
    </alternativeName>
</protein>
<keyword id="KW-0238">DNA-binding</keyword>
<keyword id="KW-0539">Nucleus</keyword>
<keyword id="KW-1267">Proteomics identification</keyword>
<keyword id="KW-1185">Reference proteome</keyword>
<keyword id="KW-0678">Repressor</keyword>
<keyword id="KW-0804">Transcription</keyword>
<keyword id="KW-0805">Transcription regulation</keyword>
<dbReference type="EMBL" id="BC044311">
    <property type="protein sequence ID" value="AAH44311.2"/>
    <property type="molecule type" value="mRNA"/>
</dbReference>
<dbReference type="CCDS" id="CCDS33055.1"/>
<dbReference type="RefSeq" id="NP_001012661.1">
    <property type="nucleotide sequence ID" value="NM_001012643.4"/>
</dbReference>
<dbReference type="SMR" id="Q86VE0"/>
<dbReference type="BioGRID" id="130870">
    <property type="interactions" value="54"/>
</dbReference>
<dbReference type="FunCoup" id="Q86VE0">
    <property type="interactions" value="477"/>
</dbReference>
<dbReference type="IntAct" id="Q86VE0">
    <property type="interactions" value="49"/>
</dbReference>
<dbReference type="STRING" id="9606.ENSP00000325402"/>
<dbReference type="GlyGen" id="Q86VE0">
    <property type="glycosylation" value="1 site, 1 O-linked glycan (1 site)"/>
</dbReference>
<dbReference type="iPTMnet" id="Q86VE0"/>
<dbReference type="PhosphoSitePlus" id="Q86VE0"/>
<dbReference type="BioMuta" id="MYPOP"/>
<dbReference type="DMDM" id="74759426"/>
<dbReference type="jPOST" id="Q86VE0"/>
<dbReference type="MassIVE" id="Q86VE0"/>
<dbReference type="PaxDb" id="9606-ENSP00000325402"/>
<dbReference type="PeptideAtlas" id="Q86VE0"/>
<dbReference type="ProteomicsDB" id="69990"/>
<dbReference type="Pumba" id="Q86VE0"/>
<dbReference type="Antibodypedia" id="45635">
    <property type="antibodies" value="17 antibodies from 9 providers"/>
</dbReference>
<dbReference type="DNASU" id="339344"/>
<dbReference type="Ensembl" id="ENST00000322217.6">
    <property type="protein sequence ID" value="ENSP00000325402.4"/>
    <property type="gene ID" value="ENSG00000176182.6"/>
</dbReference>
<dbReference type="GeneID" id="339344"/>
<dbReference type="KEGG" id="hsa:339344"/>
<dbReference type="MANE-Select" id="ENST00000322217.6">
    <property type="protein sequence ID" value="ENSP00000325402.4"/>
    <property type="RefSeq nucleotide sequence ID" value="NM_001012643.4"/>
    <property type="RefSeq protein sequence ID" value="NP_001012661.1"/>
</dbReference>
<dbReference type="UCSC" id="uc002pdt.4">
    <property type="organism name" value="human"/>
</dbReference>
<dbReference type="AGR" id="HGNC:20178"/>
<dbReference type="CTD" id="339344"/>
<dbReference type="DisGeNET" id="339344"/>
<dbReference type="GeneCards" id="MYPOP"/>
<dbReference type="HGNC" id="HGNC:20178">
    <property type="gene designation" value="MYPOP"/>
</dbReference>
<dbReference type="HPA" id="ENSG00000176182">
    <property type="expression patterns" value="Low tissue specificity"/>
</dbReference>
<dbReference type="MIM" id="617861">
    <property type="type" value="gene"/>
</dbReference>
<dbReference type="neXtProt" id="NX_Q86VE0"/>
<dbReference type="OpenTargets" id="ENSG00000176182"/>
<dbReference type="PharmGKB" id="PA164723403"/>
<dbReference type="VEuPathDB" id="HostDB:ENSG00000176182"/>
<dbReference type="eggNOG" id="ENOG502RV5V">
    <property type="taxonomic scope" value="Eukaryota"/>
</dbReference>
<dbReference type="GeneTree" id="ENSGT00450000040421"/>
<dbReference type="HOGENOM" id="CLU_046143_2_0_1"/>
<dbReference type="InParanoid" id="Q86VE0"/>
<dbReference type="OMA" id="NPQEGGC"/>
<dbReference type="OrthoDB" id="9940550at2759"/>
<dbReference type="PAN-GO" id="Q86VE0">
    <property type="GO annotations" value="4 GO annotations based on evolutionary models"/>
</dbReference>
<dbReference type="PhylomeDB" id="Q86VE0"/>
<dbReference type="TreeFam" id="TF338618"/>
<dbReference type="PathwayCommons" id="Q86VE0"/>
<dbReference type="SignaLink" id="Q86VE0"/>
<dbReference type="BioGRID-ORCS" id="339344">
    <property type="hits" value="12 hits in 1160 CRISPR screens"/>
</dbReference>
<dbReference type="GenomeRNAi" id="339344"/>
<dbReference type="Pharos" id="Q86VE0">
    <property type="development level" value="Tdark"/>
</dbReference>
<dbReference type="PRO" id="PR:Q86VE0"/>
<dbReference type="Proteomes" id="UP000005640">
    <property type="component" value="Chromosome 19"/>
</dbReference>
<dbReference type="RNAct" id="Q86VE0">
    <property type="molecule type" value="protein"/>
</dbReference>
<dbReference type="Bgee" id="ENSG00000176182">
    <property type="expression patterns" value="Expressed in oocyte and 114 other cell types or tissues"/>
</dbReference>
<dbReference type="GO" id="GO:0005634">
    <property type="term" value="C:nucleus"/>
    <property type="evidence" value="ECO:0000318"/>
    <property type="project" value="GO_Central"/>
</dbReference>
<dbReference type="GO" id="GO:0000981">
    <property type="term" value="F:DNA-binding transcription factor activity, RNA polymerase II-specific"/>
    <property type="evidence" value="ECO:0000318"/>
    <property type="project" value="GO_Central"/>
</dbReference>
<dbReference type="GO" id="GO:0001227">
    <property type="term" value="F:DNA-binding transcription repressor activity, RNA polymerase II-specific"/>
    <property type="evidence" value="ECO:0000250"/>
    <property type="project" value="ARUK-UCL"/>
</dbReference>
<dbReference type="GO" id="GO:0042802">
    <property type="term" value="F:identical protein binding"/>
    <property type="evidence" value="ECO:0007669"/>
    <property type="project" value="Ensembl"/>
</dbReference>
<dbReference type="GO" id="GO:0000978">
    <property type="term" value="F:RNA polymerase II cis-regulatory region sequence-specific DNA binding"/>
    <property type="evidence" value="ECO:0000250"/>
    <property type="project" value="ARUK-UCL"/>
</dbReference>
<dbReference type="GO" id="GO:0000122">
    <property type="term" value="P:negative regulation of transcription by RNA polymerase II"/>
    <property type="evidence" value="ECO:0000250"/>
    <property type="project" value="ARUK-UCL"/>
</dbReference>
<dbReference type="GO" id="GO:0006357">
    <property type="term" value="P:regulation of transcription by RNA polymerase II"/>
    <property type="evidence" value="ECO:0000318"/>
    <property type="project" value="GO_Central"/>
</dbReference>
<dbReference type="InterPro" id="IPR052870">
    <property type="entry name" value="Myb-related_repressor"/>
</dbReference>
<dbReference type="InterPro" id="IPR028002">
    <property type="entry name" value="Myb_DNA-bind_5"/>
</dbReference>
<dbReference type="InterPro" id="IPR001005">
    <property type="entry name" value="SANT/Myb"/>
</dbReference>
<dbReference type="PANTHER" id="PTHR32345">
    <property type="entry name" value="MYB-RELATED TRANSCRIPTION FACTOR, PARTNER OF PROFILIN"/>
    <property type="match status" value="1"/>
</dbReference>
<dbReference type="PANTHER" id="PTHR32345:SF3">
    <property type="entry name" value="MYB-RELATED TRANSCRIPTION FACTOR, PARTNER OF PROFILIN"/>
    <property type="match status" value="1"/>
</dbReference>
<dbReference type="Pfam" id="PF13873">
    <property type="entry name" value="Myb_DNA-bind_5"/>
    <property type="match status" value="1"/>
</dbReference>
<dbReference type="SMART" id="SM00717">
    <property type="entry name" value="SANT"/>
    <property type="match status" value="1"/>
</dbReference>
<dbReference type="PROSITE" id="PS50090">
    <property type="entry name" value="MYB_LIKE"/>
    <property type="match status" value="1"/>
</dbReference>
<feature type="chain" id="PRO_0000344799" description="Myb-related transcription factor, partner of profilin">
    <location>
        <begin position="1"/>
        <end position="399"/>
    </location>
</feature>
<feature type="domain" description="Myb-like" evidence="2">
    <location>
        <begin position="12"/>
        <end position="84"/>
    </location>
</feature>
<feature type="region of interest" description="Disordered" evidence="3">
    <location>
        <begin position="87"/>
        <end position="108"/>
    </location>
</feature>
<feature type="region of interest" description="Disordered" evidence="3">
    <location>
        <begin position="127"/>
        <end position="261"/>
    </location>
</feature>
<feature type="region of interest" description="Disordered" evidence="3">
    <location>
        <begin position="297"/>
        <end position="332"/>
    </location>
</feature>
<feature type="region of interest" description="Disordered" evidence="3">
    <location>
        <begin position="358"/>
        <end position="399"/>
    </location>
</feature>
<feature type="short sequence motif" description="Nuclear localization signal" evidence="1">
    <location>
        <begin position="83"/>
        <end position="86"/>
    </location>
</feature>
<feature type="short sequence motif" description="Nuclear localization signal" evidence="1">
    <location>
        <begin position="382"/>
        <end position="385"/>
    </location>
</feature>
<feature type="short sequence motif" description="Nuclear localization signal" evidence="1">
    <location>
        <begin position="390"/>
        <end position="393"/>
    </location>
</feature>
<feature type="compositionally biased region" description="Low complexity" evidence="3">
    <location>
        <begin position="127"/>
        <end position="136"/>
    </location>
</feature>
<feature type="compositionally biased region" description="Pro residues" evidence="3">
    <location>
        <begin position="137"/>
        <end position="149"/>
    </location>
</feature>
<feature type="compositionally biased region" description="Basic and acidic residues" evidence="3">
    <location>
        <begin position="156"/>
        <end position="170"/>
    </location>
</feature>
<feature type="compositionally biased region" description="Pro residues" evidence="3">
    <location>
        <begin position="219"/>
        <end position="252"/>
    </location>
</feature>
<feature type="compositionally biased region" description="Pro residues" evidence="3">
    <location>
        <begin position="305"/>
        <end position="329"/>
    </location>
</feature>
<feature type="compositionally biased region" description="Pro residues" evidence="3">
    <location>
        <begin position="366"/>
        <end position="377"/>
    </location>
</feature>
<feature type="compositionally biased region" description="Basic residues" evidence="3">
    <location>
        <begin position="381"/>
        <end position="399"/>
    </location>
</feature>
<reference key="1">
    <citation type="journal article" date="2004" name="Genome Res.">
        <title>The status, quality, and expansion of the NIH full-length cDNA project: the Mammalian Gene Collection (MGC).</title>
        <authorList>
            <consortium name="The MGC Project Team"/>
        </authorList>
    </citation>
    <scope>NUCLEOTIDE SEQUENCE [LARGE SCALE MRNA]</scope>
    <source>
        <tissue>Blood</tissue>
    </source>
</reference>
<reference key="2">
    <citation type="journal article" date="2013" name="J. Proteome Res.">
        <title>Toward a comprehensive characterization of a human cancer cell phosphoproteome.</title>
        <authorList>
            <person name="Zhou H."/>
            <person name="Di Palma S."/>
            <person name="Preisinger C."/>
            <person name="Peng M."/>
            <person name="Polat A.N."/>
            <person name="Heck A.J."/>
            <person name="Mohammed S."/>
        </authorList>
    </citation>
    <scope>IDENTIFICATION BY MASS SPECTROMETRY [LARGE SCALE ANALYSIS]</scope>
    <source>
        <tissue>Erythroleukemia</tissue>
    </source>
</reference>
<organism>
    <name type="scientific">Homo sapiens</name>
    <name type="common">Human</name>
    <dbReference type="NCBI Taxonomy" id="9606"/>
    <lineage>
        <taxon>Eukaryota</taxon>
        <taxon>Metazoa</taxon>
        <taxon>Chordata</taxon>
        <taxon>Craniata</taxon>
        <taxon>Vertebrata</taxon>
        <taxon>Euteleostomi</taxon>
        <taxon>Mammalia</taxon>
        <taxon>Eutheria</taxon>
        <taxon>Euarchontoglires</taxon>
        <taxon>Primates</taxon>
        <taxon>Haplorrhini</taxon>
        <taxon>Catarrhini</taxon>
        <taxon>Hominidae</taxon>
        <taxon>Homo</taxon>
    </lineage>
</organism>
<name>MYPOP_HUMAN</name>
<accession>Q86VE0</accession>
<gene>
    <name type="primary">MYPOP</name>
    <name type="synonym">P42POP</name>
</gene>
<sequence>MASAAAGEAEETTRLRKPRFSFEENQILIREVRAHYPQLYGAQSRRVSVAERRRVWDGIAAKINGITSWKRTGQEVQKRWNDFKRRTKEKLARVPHSTQGAGPAAEDAFSAEEETIFAILGPGVAAPGAGAGAEEPPAAPSSQPPPPSACPQRYVLSEDRREDRRADTSAHSKAGSSSPEPWARPSCTPQEGGCPRPKERESPPPSALQPVQLPRLALSPPPPAPPLPPPPPLAQVAPSPPSPPPPPRPPPTLSASDPSLDFLRAQQETANAIRELAGTLRQGLAKLSEALSALLPLLPGTPVDSLPPPLPPPPPPPPPPRPVLPPPAPKVEITPEPVSVVAAVVDGAVVAARGVIIAPRSEEGAPRPPPAPLPPHDSPPHKRRKGFPTRKRRGRWKSP</sequence>
<proteinExistence type="evidence at protein level"/>